<gene>
    <name evidence="1" type="primary">pnp</name>
    <name type="ordered locus">VS_2478</name>
</gene>
<feature type="chain" id="PRO_1000185762" description="Polyribonucleotide nucleotidyltransferase">
    <location>
        <begin position="1"/>
        <end position="706"/>
    </location>
</feature>
<feature type="domain" description="KH" evidence="1">
    <location>
        <begin position="554"/>
        <end position="613"/>
    </location>
</feature>
<feature type="domain" description="S1 motif" evidence="1">
    <location>
        <begin position="623"/>
        <end position="691"/>
    </location>
</feature>
<feature type="binding site" evidence="1">
    <location>
        <position position="487"/>
    </location>
    <ligand>
        <name>Mg(2+)</name>
        <dbReference type="ChEBI" id="CHEBI:18420"/>
    </ligand>
</feature>
<feature type="binding site" evidence="1">
    <location>
        <position position="493"/>
    </location>
    <ligand>
        <name>Mg(2+)</name>
        <dbReference type="ChEBI" id="CHEBI:18420"/>
    </ligand>
</feature>
<keyword id="KW-0963">Cytoplasm</keyword>
<keyword id="KW-0460">Magnesium</keyword>
<keyword id="KW-0479">Metal-binding</keyword>
<keyword id="KW-0548">Nucleotidyltransferase</keyword>
<keyword id="KW-0694">RNA-binding</keyword>
<keyword id="KW-0808">Transferase</keyword>
<accession>B7VJH3</accession>
<dbReference type="EC" id="2.7.7.8" evidence="1"/>
<dbReference type="EMBL" id="FM954972">
    <property type="protein sequence ID" value="CAV19637.1"/>
    <property type="molecule type" value="Genomic_DNA"/>
</dbReference>
<dbReference type="SMR" id="B7VJH3"/>
<dbReference type="STRING" id="575788.VS_2478"/>
<dbReference type="KEGG" id="vsp:VS_2478"/>
<dbReference type="eggNOG" id="COG1185">
    <property type="taxonomic scope" value="Bacteria"/>
</dbReference>
<dbReference type="HOGENOM" id="CLU_004217_2_2_6"/>
<dbReference type="Proteomes" id="UP000009100">
    <property type="component" value="Chromosome 1"/>
</dbReference>
<dbReference type="GO" id="GO:0005829">
    <property type="term" value="C:cytosol"/>
    <property type="evidence" value="ECO:0007669"/>
    <property type="project" value="TreeGrafter"/>
</dbReference>
<dbReference type="GO" id="GO:0000175">
    <property type="term" value="F:3'-5'-RNA exonuclease activity"/>
    <property type="evidence" value="ECO:0007669"/>
    <property type="project" value="TreeGrafter"/>
</dbReference>
<dbReference type="GO" id="GO:0000287">
    <property type="term" value="F:magnesium ion binding"/>
    <property type="evidence" value="ECO:0007669"/>
    <property type="project" value="UniProtKB-UniRule"/>
</dbReference>
<dbReference type="GO" id="GO:0004654">
    <property type="term" value="F:polyribonucleotide nucleotidyltransferase activity"/>
    <property type="evidence" value="ECO:0007669"/>
    <property type="project" value="UniProtKB-UniRule"/>
</dbReference>
<dbReference type="GO" id="GO:0003723">
    <property type="term" value="F:RNA binding"/>
    <property type="evidence" value="ECO:0007669"/>
    <property type="project" value="UniProtKB-UniRule"/>
</dbReference>
<dbReference type="GO" id="GO:0006402">
    <property type="term" value="P:mRNA catabolic process"/>
    <property type="evidence" value="ECO:0007669"/>
    <property type="project" value="UniProtKB-UniRule"/>
</dbReference>
<dbReference type="GO" id="GO:0006396">
    <property type="term" value="P:RNA processing"/>
    <property type="evidence" value="ECO:0007669"/>
    <property type="project" value="InterPro"/>
</dbReference>
<dbReference type="CDD" id="cd02393">
    <property type="entry name" value="KH-I_PNPase"/>
    <property type="match status" value="1"/>
</dbReference>
<dbReference type="CDD" id="cd11363">
    <property type="entry name" value="RNase_PH_PNPase_1"/>
    <property type="match status" value="1"/>
</dbReference>
<dbReference type="CDD" id="cd11364">
    <property type="entry name" value="RNase_PH_PNPase_2"/>
    <property type="match status" value="1"/>
</dbReference>
<dbReference type="CDD" id="cd04472">
    <property type="entry name" value="S1_PNPase"/>
    <property type="match status" value="1"/>
</dbReference>
<dbReference type="FunFam" id="2.40.50.140:FF:000023">
    <property type="entry name" value="Polyribonucleotide nucleotidyltransferase"/>
    <property type="match status" value="1"/>
</dbReference>
<dbReference type="FunFam" id="3.30.1370.10:FF:000001">
    <property type="entry name" value="Polyribonucleotide nucleotidyltransferase"/>
    <property type="match status" value="1"/>
</dbReference>
<dbReference type="FunFam" id="3.30.230.70:FF:000001">
    <property type="entry name" value="Polyribonucleotide nucleotidyltransferase"/>
    <property type="match status" value="1"/>
</dbReference>
<dbReference type="FunFam" id="3.30.230.70:FF:000002">
    <property type="entry name" value="Polyribonucleotide nucleotidyltransferase"/>
    <property type="match status" value="1"/>
</dbReference>
<dbReference type="Gene3D" id="3.30.230.70">
    <property type="entry name" value="GHMP Kinase, N-terminal domain"/>
    <property type="match status" value="2"/>
</dbReference>
<dbReference type="Gene3D" id="3.30.1370.10">
    <property type="entry name" value="K Homology domain, type 1"/>
    <property type="match status" value="1"/>
</dbReference>
<dbReference type="Gene3D" id="2.40.50.140">
    <property type="entry name" value="Nucleic acid-binding proteins"/>
    <property type="match status" value="1"/>
</dbReference>
<dbReference type="HAMAP" id="MF_01595">
    <property type="entry name" value="PNPase"/>
    <property type="match status" value="1"/>
</dbReference>
<dbReference type="InterPro" id="IPR001247">
    <property type="entry name" value="ExoRNase_PH_dom1"/>
</dbReference>
<dbReference type="InterPro" id="IPR015847">
    <property type="entry name" value="ExoRNase_PH_dom2"/>
</dbReference>
<dbReference type="InterPro" id="IPR036345">
    <property type="entry name" value="ExoRNase_PH_dom2_sf"/>
</dbReference>
<dbReference type="InterPro" id="IPR004087">
    <property type="entry name" value="KH_dom"/>
</dbReference>
<dbReference type="InterPro" id="IPR004088">
    <property type="entry name" value="KH_dom_type_1"/>
</dbReference>
<dbReference type="InterPro" id="IPR036612">
    <property type="entry name" value="KH_dom_type_1_sf"/>
</dbReference>
<dbReference type="InterPro" id="IPR012340">
    <property type="entry name" value="NA-bd_OB-fold"/>
</dbReference>
<dbReference type="InterPro" id="IPR012162">
    <property type="entry name" value="PNPase"/>
</dbReference>
<dbReference type="InterPro" id="IPR027408">
    <property type="entry name" value="PNPase/RNase_PH_dom_sf"/>
</dbReference>
<dbReference type="InterPro" id="IPR015848">
    <property type="entry name" value="PNPase_PH_RNA-bd_bac/org-type"/>
</dbReference>
<dbReference type="InterPro" id="IPR036456">
    <property type="entry name" value="PNPase_PH_RNA-bd_sf"/>
</dbReference>
<dbReference type="InterPro" id="IPR020568">
    <property type="entry name" value="Ribosomal_Su5_D2-typ_SF"/>
</dbReference>
<dbReference type="InterPro" id="IPR003029">
    <property type="entry name" value="S1_domain"/>
</dbReference>
<dbReference type="NCBIfam" id="TIGR03591">
    <property type="entry name" value="polynuc_phos"/>
    <property type="match status" value="1"/>
</dbReference>
<dbReference type="NCBIfam" id="NF008805">
    <property type="entry name" value="PRK11824.1"/>
    <property type="match status" value="1"/>
</dbReference>
<dbReference type="PANTHER" id="PTHR11252">
    <property type="entry name" value="POLYRIBONUCLEOTIDE NUCLEOTIDYLTRANSFERASE"/>
    <property type="match status" value="1"/>
</dbReference>
<dbReference type="PANTHER" id="PTHR11252:SF0">
    <property type="entry name" value="POLYRIBONUCLEOTIDE NUCLEOTIDYLTRANSFERASE 1, MITOCHONDRIAL"/>
    <property type="match status" value="1"/>
</dbReference>
<dbReference type="Pfam" id="PF00013">
    <property type="entry name" value="KH_1"/>
    <property type="match status" value="1"/>
</dbReference>
<dbReference type="Pfam" id="PF03726">
    <property type="entry name" value="PNPase"/>
    <property type="match status" value="1"/>
</dbReference>
<dbReference type="Pfam" id="PF01138">
    <property type="entry name" value="RNase_PH"/>
    <property type="match status" value="2"/>
</dbReference>
<dbReference type="Pfam" id="PF03725">
    <property type="entry name" value="RNase_PH_C"/>
    <property type="match status" value="2"/>
</dbReference>
<dbReference type="Pfam" id="PF00575">
    <property type="entry name" value="S1"/>
    <property type="match status" value="1"/>
</dbReference>
<dbReference type="PIRSF" id="PIRSF005499">
    <property type="entry name" value="PNPase"/>
    <property type="match status" value="1"/>
</dbReference>
<dbReference type="SMART" id="SM00322">
    <property type="entry name" value="KH"/>
    <property type="match status" value="1"/>
</dbReference>
<dbReference type="SMART" id="SM00316">
    <property type="entry name" value="S1"/>
    <property type="match status" value="1"/>
</dbReference>
<dbReference type="SUPFAM" id="SSF54791">
    <property type="entry name" value="Eukaryotic type KH-domain (KH-domain type I)"/>
    <property type="match status" value="1"/>
</dbReference>
<dbReference type="SUPFAM" id="SSF50249">
    <property type="entry name" value="Nucleic acid-binding proteins"/>
    <property type="match status" value="1"/>
</dbReference>
<dbReference type="SUPFAM" id="SSF46915">
    <property type="entry name" value="Polynucleotide phosphorylase/guanosine pentaphosphate synthase (PNPase/GPSI), domain 3"/>
    <property type="match status" value="1"/>
</dbReference>
<dbReference type="SUPFAM" id="SSF55666">
    <property type="entry name" value="Ribonuclease PH domain 2-like"/>
    <property type="match status" value="2"/>
</dbReference>
<dbReference type="SUPFAM" id="SSF54211">
    <property type="entry name" value="Ribosomal protein S5 domain 2-like"/>
    <property type="match status" value="2"/>
</dbReference>
<dbReference type="PROSITE" id="PS50084">
    <property type="entry name" value="KH_TYPE_1"/>
    <property type="match status" value="1"/>
</dbReference>
<dbReference type="PROSITE" id="PS50126">
    <property type="entry name" value="S1"/>
    <property type="match status" value="1"/>
</dbReference>
<reference key="1">
    <citation type="submission" date="2009-02" db="EMBL/GenBank/DDBJ databases">
        <title>Vibrio splendidus str. LGP32 complete genome.</title>
        <authorList>
            <person name="Mazel D."/>
            <person name="Le Roux F."/>
        </authorList>
    </citation>
    <scope>NUCLEOTIDE SEQUENCE [LARGE SCALE GENOMIC DNA]</scope>
    <source>
        <strain>LGP32</strain>
    </source>
</reference>
<proteinExistence type="inferred from homology"/>
<organism>
    <name type="scientific">Vibrio atlanticus (strain LGP32)</name>
    <name type="common">Vibrio splendidus (strain Mel32)</name>
    <dbReference type="NCBI Taxonomy" id="575788"/>
    <lineage>
        <taxon>Bacteria</taxon>
        <taxon>Pseudomonadati</taxon>
        <taxon>Pseudomonadota</taxon>
        <taxon>Gammaproteobacteria</taxon>
        <taxon>Vibrionales</taxon>
        <taxon>Vibrionaceae</taxon>
        <taxon>Vibrio</taxon>
    </lineage>
</organism>
<sequence length="706" mass="76071">MFEKPVVKSFQYGNHTVTLETGVMARQATAAVMATMDDTSVFVSVVAKKEAVAGQDFFPLTVNYQERTYAAGKIPGGFFKREGRPSEGETLTARLIDRPIRPLFPSAFKNEVQVIATVVSINPDVNPDMITMIATSAALAISGAPFNGPIGAARVGHIDGELVLNPSNTELENSKLDLVVSGTEGAVLMVESEADNLSEEEMLSAVVYGHDQQQVVIKAINEFAAEVATPSWNWEAPAVNTELKAQVAELAETRLSDAYQITEKMARYEQVGAIKNDTVEALIAQDENLDEREIRGMLGSLEKNVVRSRIIAGNPRIDGREKDMVRALDVRTGVLPRTHGSSLFTRGETQALVTATLGTQRDAQIIDSLMGEKKDNFLLHYNFPPYCVGETGFVGSPKRREIGHGKLAKRGIQAVMPSVDEFPYTVRVVSEITESNGSSSMASVCGTSLALMDAGVPIKASVAGIAMGLVKEGDDFVVLSDILGDEDHLGDMDFKVAGTNAGITALQMDIKIEGITKEIMQIALNQAQGARKHILSVMDEAISGAREDISEFAPRIHTMKISSDKIKDVIGKGGAVIRALCEETGTTIEIEDDGTIKIAATEGAAAKEAIRRIEEITAEVEVGRIYQGKVARLADFGAFVTILPGKDGLVHISQIADKRVEKVSDYLTEGQEVPVKVLEIDRQGRVRLSMKEAVETPAEGEAPAAE</sequence>
<name>PNP_VIBA3</name>
<protein>
    <recommendedName>
        <fullName evidence="1">Polyribonucleotide nucleotidyltransferase</fullName>
        <ecNumber evidence="1">2.7.7.8</ecNumber>
    </recommendedName>
    <alternativeName>
        <fullName evidence="1">Polynucleotide phosphorylase</fullName>
        <shortName evidence="1">PNPase</shortName>
    </alternativeName>
</protein>
<comment type="function">
    <text evidence="1">Involved in mRNA degradation. Catalyzes the phosphorolysis of single-stranded polyribonucleotides processively in the 3'- to 5'-direction.</text>
</comment>
<comment type="catalytic activity">
    <reaction evidence="1">
        <text>RNA(n+1) + phosphate = RNA(n) + a ribonucleoside 5'-diphosphate</text>
        <dbReference type="Rhea" id="RHEA:22096"/>
        <dbReference type="Rhea" id="RHEA-COMP:14527"/>
        <dbReference type="Rhea" id="RHEA-COMP:17342"/>
        <dbReference type="ChEBI" id="CHEBI:43474"/>
        <dbReference type="ChEBI" id="CHEBI:57930"/>
        <dbReference type="ChEBI" id="CHEBI:140395"/>
        <dbReference type="EC" id="2.7.7.8"/>
    </reaction>
</comment>
<comment type="cofactor">
    <cofactor evidence="1">
        <name>Mg(2+)</name>
        <dbReference type="ChEBI" id="CHEBI:18420"/>
    </cofactor>
</comment>
<comment type="subunit">
    <text evidence="1">Component of the RNA degradosome, which is a multiprotein complex involved in RNA processing and mRNA degradation.</text>
</comment>
<comment type="subcellular location">
    <subcellularLocation>
        <location evidence="1">Cytoplasm</location>
    </subcellularLocation>
</comment>
<comment type="similarity">
    <text evidence="1">Belongs to the polyribonucleotide nucleotidyltransferase family.</text>
</comment>
<evidence type="ECO:0000255" key="1">
    <source>
        <dbReference type="HAMAP-Rule" id="MF_01595"/>
    </source>
</evidence>